<protein>
    <recommendedName>
        <fullName evidence="1">Leucine--tRNA ligase</fullName>
        <ecNumber evidence="1">6.1.1.4</ecNumber>
    </recommendedName>
    <alternativeName>
        <fullName evidence="1">Leucyl-tRNA synthetase</fullName>
        <shortName evidence="1">LeuRS</shortName>
    </alternativeName>
</protein>
<feature type="chain" id="PRO_1000009414" description="Leucine--tRNA ligase">
    <location>
        <begin position="1"/>
        <end position="847"/>
    </location>
</feature>
<feature type="short sequence motif" description="'HIGH' region">
    <location>
        <begin position="41"/>
        <end position="51"/>
    </location>
</feature>
<feature type="short sequence motif" description="'KMSKS' region">
    <location>
        <begin position="619"/>
        <end position="623"/>
    </location>
</feature>
<feature type="binding site" evidence="1">
    <location>
        <position position="622"/>
    </location>
    <ligand>
        <name>ATP</name>
        <dbReference type="ChEBI" id="CHEBI:30616"/>
    </ligand>
</feature>
<proteinExistence type="inferred from homology"/>
<keyword id="KW-0030">Aminoacyl-tRNA synthetase</keyword>
<keyword id="KW-0067">ATP-binding</keyword>
<keyword id="KW-0963">Cytoplasm</keyword>
<keyword id="KW-0436">Ligase</keyword>
<keyword id="KW-0547">Nucleotide-binding</keyword>
<keyword id="KW-0648">Protein biosynthesis</keyword>
<keyword id="KW-1185">Reference proteome</keyword>
<organism>
    <name type="scientific">Cereibacter sphaeroides (strain ATCC 17023 / DSM 158 / JCM 6121 / CCUG 31486 / LMG 2827 / NBRC 12203 / NCIMB 8253 / ATH 2.4.1.)</name>
    <name type="common">Rhodobacter sphaeroides</name>
    <dbReference type="NCBI Taxonomy" id="272943"/>
    <lineage>
        <taxon>Bacteria</taxon>
        <taxon>Pseudomonadati</taxon>
        <taxon>Pseudomonadota</taxon>
        <taxon>Alphaproteobacteria</taxon>
        <taxon>Rhodobacterales</taxon>
        <taxon>Paracoccaceae</taxon>
        <taxon>Cereibacter</taxon>
    </lineage>
</organism>
<accession>Q3IZL4</accession>
<evidence type="ECO:0000255" key="1">
    <source>
        <dbReference type="HAMAP-Rule" id="MF_00049"/>
    </source>
</evidence>
<name>SYL_CERS4</name>
<comment type="catalytic activity">
    <reaction evidence="1">
        <text>tRNA(Leu) + L-leucine + ATP = L-leucyl-tRNA(Leu) + AMP + diphosphate</text>
        <dbReference type="Rhea" id="RHEA:11688"/>
        <dbReference type="Rhea" id="RHEA-COMP:9613"/>
        <dbReference type="Rhea" id="RHEA-COMP:9622"/>
        <dbReference type="ChEBI" id="CHEBI:30616"/>
        <dbReference type="ChEBI" id="CHEBI:33019"/>
        <dbReference type="ChEBI" id="CHEBI:57427"/>
        <dbReference type="ChEBI" id="CHEBI:78442"/>
        <dbReference type="ChEBI" id="CHEBI:78494"/>
        <dbReference type="ChEBI" id="CHEBI:456215"/>
        <dbReference type="EC" id="6.1.1.4"/>
    </reaction>
</comment>
<comment type="subcellular location">
    <subcellularLocation>
        <location evidence="1">Cytoplasm</location>
    </subcellularLocation>
</comment>
<comment type="similarity">
    <text evidence="1">Belongs to the class-I aminoacyl-tRNA synthetase family.</text>
</comment>
<gene>
    <name evidence="1" type="primary">leuS</name>
    <name type="ordered locus">RHOS4_24520</name>
    <name type="ORF">RSP_0840</name>
</gene>
<sequence length="847" mass="94033">MSRYDPAATESRWQAAWDAAGVFTARHDPARPKYYVLEMFPYPSGRIHMGHVRNYTMGDVVARQKAAAGFSVLHPMGWDAFGMPAENAAMERGGHPKDWTYGNIADMRAQMKPLGLSIDWSREFATCDPEYYGQQQAMFIDMMEAGLVYRKNAVVNWDPVDMTVLANEQVIDGKGWRSGAPVVRRELTQWFFRISDYAGELLEALDTLKDWPEKVRLMQANWIGQSRGLQFAFSMAGAPEGFDRLEVYTTRPDTLMGASFAAISPDHPLARHLERHDPEVAEFVAECRRVGTSEEALEKAEKKGFDTGLRVRHPFDAAWELPVYIANFILMDYGTGAIFGCPAHDQRDFEFATKYGLPIRPVFLPEGCEETALAEAFVPMKSERVHYIRGFAGAEVQTGEEGVAAAIAFCESQGVGRGVTNYRLRDWGISRQRYWGCPIPVIHCETCGVVPEAKENLPVRLPDDVSFDVPGNPLDRHPTWRDCTCPKCGAKARRETDTMDTFVDSSWYYARFTAPRAATPTDAEEADYWMNVDQYIGGIEHAILHLLYSRFFARAMQKTGHLPAKAIEPFNALFTQGMVTHEIYLTRDAAGRPVYHLPEDVTDGKLADGTPVEIIPSAKMSKSKKNVVDPMNIIRQFGADTARWFVMSDSPPERDVEWTASGAEAASKHLHRVWRLADEISRADGEANAEDGALDKATARAIAEVTQGVEGFAFNKAIAKLYEFTNTLSRSGAGAEAKKRAMRTMAQLMSPMVPHLAEEVWAMLGGEGLVAQAAWPKADPALLIDDTVTLPIQVNGKRRGEITVPKEMAASEVEKLVLADEAVQRALGGAAPKKLIVVPGRIVNVVI</sequence>
<reference key="1">
    <citation type="submission" date="2005-09" db="EMBL/GenBank/DDBJ databases">
        <title>Complete sequence of chromosome 1 of Rhodobacter sphaeroides 2.4.1.</title>
        <authorList>
            <person name="Copeland A."/>
            <person name="Lucas S."/>
            <person name="Lapidus A."/>
            <person name="Barry K."/>
            <person name="Detter J.C."/>
            <person name="Glavina T."/>
            <person name="Hammon N."/>
            <person name="Israni S."/>
            <person name="Pitluck S."/>
            <person name="Richardson P."/>
            <person name="Mackenzie C."/>
            <person name="Choudhary M."/>
            <person name="Larimer F."/>
            <person name="Hauser L.J."/>
            <person name="Land M."/>
            <person name="Donohue T.J."/>
            <person name="Kaplan S."/>
        </authorList>
    </citation>
    <scope>NUCLEOTIDE SEQUENCE [LARGE SCALE GENOMIC DNA]</scope>
    <source>
        <strain>ATCC 17023 / DSM 158 / JCM 6121 / CCUG 31486 / LMG 2827 / NBRC 12203 / NCIMB 8253 / ATH 2.4.1.</strain>
    </source>
</reference>
<dbReference type="EC" id="6.1.1.4" evidence="1"/>
<dbReference type="EMBL" id="CP000143">
    <property type="protein sequence ID" value="ABA80020.1"/>
    <property type="molecule type" value="Genomic_DNA"/>
</dbReference>
<dbReference type="RefSeq" id="WP_011338533.1">
    <property type="nucleotide sequence ID" value="NC_007493.2"/>
</dbReference>
<dbReference type="RefSeq" id="YP_353921.1">
    <property type="nucleotide sequence ID" value="NC_007493.2"/>
</dbReference>
<dbReference type="SMR" id="Q3IZL4"/>
<dbReference type="STRING" id="272943.RSP_0840"/>
<dbReference type="EnsemblBacteria" id="ABA80020">
    <property type="protein sequence ID" value="ABA80020"/>
    <property type="gene ID" value="RSP_0840"/>
</dbReference>
<dbReference type="GeneID" id="3718381"/>
<dbReference type="KEGG" id="rsp:RSP_0840"/>
<dbReference type="PATRIC" id="fig|272943.9.peg.2803"/>
<dbReference type="eggNOG" id="COG0495">
    <property type="taxonomic scope" value="Bacteria"/>
</dbReference>
<dbReference type="OrthoDB" id="9810365at2"/>
<dbReference type="PhylomeDB" id="Q3IZL4"/>
<dbReference type="Proteomes" id="UP000002703">
    <property type="component" value="Chromosome 1"/>
</dbReference>
<dbReference type="GO" id="GO:0005829">
    <property type="term" value="C:cytosol"/>
    <property type="evidence" value="ECO:0007669"/>
    <property type="project" value="TreeGrafter"/>
</dbReference>
<dbReference type="GO" id="GO:0002161">
    <property type="term" value="F:aminoacyl-tRNA deacylase activity"/>
    <property type="evidence" value="ECO:0007669"/>
    <property type="project" value="InterPro"/>
</dbReference>
<dbReference type="GO" id="GO:0005524">
    <property type="term" value="F:ATP binding"/>
    <property type="evidence" value="ECO:0007669"/>
    <property type="project" value="UniProtKB-UniRule"/>
</dbReference>
<dbReference type="GO" id="GO:0004823">
    <property type="term" value="F:leucine-tRNA ligase activity"/>
    <property type="evidence" value="ECO:0007669"/>
    <property type="project" value="UniProtKB-UniRule"/>
</dbReference>
<dbReference type="GO" id="GO:0006429">
    <property type="term" value="P:leucyl-tRNA aminoacylation"/>
    <property type="evidence" value="ECO:0007669"/>
    <property type="project" value="UniProtKB-UniRule"/>
</dbReference>
<dbReference type="CDD" id="cd07958">
    <property type="entry name" value="Anticodon_Ia_Leu_BEm"/>
    <property type="match status" value="1"/>
</dbReference>
<dbReference type="CDD" id="cd00812">
    <property type="entry name" value="LeuRS_core"/>
    <property type="match status" value="1"/>
</dbReference>
<dbReference type="FunFam" id="1.10.730.10:FF:000002">
    <property type="entry name" value="Leucine--tRNA ligase"/>
    <property type="match status" value="1"/>
</dbReference>
<dbReference type="FunFam" id="3.40.50.620:FF:000003">
    <property type="entry name" value="Leucine--tRNA ligase"/>
    <property type="match status" value="1"/>
</dbReference>
<dbReference type="Gene3D" id="2.20.28.290">
    <property type="match status" value="1"/>
</dbReference>
<dbReference type="Gene3D" id="3.10.20.590">
    <property type="match status" value="1"/>
</dbReference>
<dbReference type="Gene3D" id="3.40.50.620">
    <property type="entry name" value="HUPs"/>
    <property type="match status" value="2"/>
</dbReference>
<dbReference type="Gene3D" id="1.10.730.10">
    <property type="entry name" value="Isoleucyl-tRNA Synthetase, Domain 1"/>
    <property type="match status" value="1"/>
</dbReference>
<dbReference type="Gene3D" id="3.90.740.10">
    <property type="entry name" value="Valyl/Leucyl/Isoleucyl-tRNA synthetase, editing domain"/>
    <property type="match status" value="1"/>
</dbReference>
<dbReference type="HAMAP" id="MF_00049_B">
    <property type="entry name" value="Leu_tRNA_synth_B"/>
    <property type="match status" value="1"/>
</dbReference>
<dbReference type="InterPro" id="IPR001412">
    <property type="entry name" value="aa-tRNA-synth_I_CS"/>
</dbReference>
<dbReference type="InterPro" id="IPR002300">
    <property type="entry name" value="aa-tRNA-synth_Ia"/>
</dbReference>
<dbReference type="InterPro" id="IPR002302">
    <property type="entry name" value="Leu-tRNA-ligase"/>
</dbReference>
<dbReference type="InterPro" id="IPR025709">
    <property type="entry name" value="Leu_tRNA-synth_edit"/>
</dbReference>
<dbReference type="InterPro" id="IPR013155">
    <property type="entry name" value="M/V/L/I-tRNA-synth_anticd-bd"/>
</dbReference>
<dbReference type="InterPro" id="IPR015413">
    <property type="entry name" value="Methionyl/Leucyl_tRNA_Synth"/>
</dbReference>
<dbReference type="InterPro" id="IPR014729">
    <property type="entry name" value="Rossmann-like_a/b/a_fold"/>
</dbReference>
<dbReference type="InterPro" id="IPR009080">
    <property type="entry name" value="tRNAsynth_Ia_anticodon-bd"/>
</dbReference>
<dbReference type="InterPro" id="IPR009008">
    <property type="entry name" value="Val/Leu/Ile-tRNA-synth_edit"/>
</dbReference>
<dbReference type="NCBIfam" id="TIGR00396">
    <property type="entry name" value="leuS_bact"/>
    <property type="match status" value="1"/>
</dbReference>
<dbReference type="PANTHER" id="PTHR43740:SF2">
    <property type="entry name" value="LEUCINE--TRNA LIGASE, MITOCHONDRIAL"/>
    <property type="match status" value="1"/>
</dbReference>
<dbReference type="PANTHER" id="PTHR43740">
    <property type="entry name" value="LEUCYL-TRNA SYNTHETASE"/>
    <property type="match status" value="1"/>
</dbReference>
<dbReference type="Pfam" id="PF08264">
    <property type="entry name" value="Anticodon_1"/>
    <property type="match status" value="1"/>
</dbReference>
<dbReference type="Pfam" id="PF00133">
    <property type="entry name" value="tRNA-synt_1"/>
    <property type="match status" value="2"/>
</dbReference>
<dbReference type="Pfam" id="PF13603">
    <property type="entry name" value="tRNA-synt_1_2"/>
    <property type="match status" value="1"/>
</dbReference>
<dbReference type="Pfam" id="PF09334">
    <property type="entry name" value="tRNA-synt_1g"/>
    <property type="match status" value="1"/>
</dbReference>
<dbReference type="PRINTS" id="PR00985">
    <property type="entry name" value="TRNASYNTHLEU"/>
</dbReference>
<dbReference type="SUPFAM" id="SSF47323">
    <property type="entry name" value="Anticodon-binding domain of a subclass of class I aminoacyl-tRNA synthetases"/>
    <property type="match status" value="1"/>
</dbReference>
<dbReference type="SUPFAM" id="SSF52374">
    <property type="entry name" value="Nucleotidylyl transferase"/>
    <property type="match status" value="1"/>
</dbReference>
<dbReference type="SUPFAM" id="SSF50677">
    <property type="entry name" value="ValRS/IleRS/LeuRS editing domain"/>
    <property type="match status" value="1"/>
</dbReference>
<dbReference type="PROSITE" id="PS00178">
    <property type="entry name" value="AA_TRNA_LIGASE_I"/>
    <property type="match status" value="1"/>
</dbReference>